<feature type="chain" id="PRO_0000167741" description="Pyridoxine/pyridoxamine 5'-phosphate oxidase">
    <location>
        <begin position="1"/>
        <end position="215"/>
    </location>
</feature>
<feature type="binding site" evidence="1">
    <location>
        <begin position="9"/>
        <end position="12"/>
    </location>
    <ligand>
        <name>substrate</name>
    </ligand>
</feature>
<feature type="binding site" evidence="1">
    <location>
        <begin position="64"/>
        <end position="69"/>
    </location>
    <ligand>
        <name>FMN</name>
        <dbReference type="ChEBI" id="CHEBI:58210"/>
    </ligand>
</feature>
<feature type="binding site" evidence="1">
    <location>
        <position position="69"/>
    </location>
    <ligand>
        <name>substrate</name>
    </ligand>
</feature>
<feature type="binding site" evidence="1">
    <location>
        <begin position="79"/>
        <end position="80"/>
    </location>
    <ligand>
        <name>FMN</name>
        <dbReference type="ChEBI" id="CHEBI:58210"/>
    </ligand>
</feature>
<feature type="binding site" evidence="1">
    <location>
        <position position="86"/>
    </location>
    <ligand>
        <name>FMN</name>
        <dbReference type="ChEBI" id="CHEBI:58210"/>
    </ligand>
</feature>
<feature type="binding site" evidence="1">
    <location>
        <position position="108"/>
    </location>
    <ligand>
        <name>FMN</name>
        <dbReference type="ChEBI" id="CHEBI:58210"/>
    </ligand>
</feature>
<feature type="binding site" evidence="1">
    <location>
        <position position="126"/>
    </location>
    <ligand>
        <name>substrate</name>
    </ligand>
</feature>
<feature type="binding site" evidence="1">
    <location>
        <position position="130"/>
    </location>
    <ligand>
        <name>substrate</name>
    </ligand>
</feature>
<feature type="binding site" evidence="1">
    <location>
        <position position="134"/>
    </location>
    <ligand>
        <name>substrate</name>
    </ligand>
</feature>
<feature type="binding site" evidence="1">
    <location>
        <begin position="143"/>
        <end position="144"/>
    </location>
    <ligand>
        <name>FMN</name>
        <dbReference type="ChEBI" id="CHEBI:58210"/>
    </ligand>
</feature>
<feature type="binding site" evidence="1">
    <location>
        <position position="188"/>
    </location>
    <ligand>
        <name>FMN</name>
        <dbReference type="ChEBI" id="CHEBI:58210"/>
    </ligand>
</feature>
<feature type="binding site" evidence="1">
    <location>
        <begin position="194"/>
        <end position="196"/>
    </location>
    <ligand>
        <name>substrate</name>
    </ligand>
</feature>
<feature type="binding site" evidence="1">
    <location>
        <position position="198"/>
    </location>
    <ligand>
        <name>FMN</name>
        <dbReference type="ChEBI" id="CHEBI:58210"/>
    </ligand>
</feature>
<gene>
    <name evidence="1" type="primary">pdxH</name>
    <name type="ordered locus">PSPTO_4116</name>
</gene>
<accession>Q87XR0</accession>
<name>PDXH_PSESM</name>
<organism>
    <name type="scientific">Pseudomonas syringae pv. tomato (strain ATCC BAA-871 / DC3000)</name>
    <dbReference type="NCBI Taxonomy" id="223283"/>
    <lineage>
        <taxon>Bacteria</taxon>
        <taxon>Pseudomonadati</taxon>
        <taxon>Pseudomonadota</taxon>
        <taxon>Gammaproteobacteria</taxon>
        <taxon>Pseudomonadales</taxon>
        <taxon>Pseudomonadaceae</taxon>
        <taxon>Pseudomonas</taxon>
    </lineage>
</organism>
<sequence>MTQTLADMRRDYTRDGLTEAQSPQEPFALFHTWFEEAVKTEQPPVEANAMTLATVDEEGRPHCRVLLLKGLDAQGFTFFTNYESAKGRQLAAHPFAAMTFFWPALERQVRIEGRVEKVSAQESDAYYQVRPLGSRLGAWASPQSRVIADRDELEGLIRQTEQRFADTQPHCPEHWGGYRLLPERIEFWQGRSSRLHDRLNYRLINAKWARERLAP</sequence>
<protein>
    <recommendedName>
        <fullName evidence="1">Pyridoxine/pyridoxamine 5'-phosphate oxidase</fullName>
        <ecNumber evidence="1">1.4.3.5</ecNumber>
    </recommendedName>
    <alternativeName>
        <fullName evidence="1">PNP/PMP oxidase</fullName>
        <shortName evidence="1">PNPOx</shortName>
    </alternativeName>
    <alternativeName>
        <fullName evidence="1">Pyridoxal 5'-phosphate synthase</fullName>
    </alternativeName>
</protein>
<proteinExistence type="inferred from homology"/>
<dbReference type="EC" id="1.4.3.5" evidence="1"/>
<dbReference type="EMBL" id="AE016853">
    <property type="protein sequence ID" value="AAO57572.1"/>
    <property type="molecule type" value="Genomic_DNA"/>
</dbReference>
<dbReference type="RefSeq" id="NP_793877.1">
    <property type="nucleotide sequence ID" value="NC_004578.1"/>
</dbReference>
<dbReference type="RefSeq" id="WP_005764922.1">
    <property type="nucleotide sequence ID" value="NC_004578.1"/>
</dbReference>
<dbReference type="SMR" id="Q87XR0"/>
<dbReference type="STRING" id="223283.PSPTO_4116"/>
<dbReference type="GeneID" id="1185796"/>
<dbReference type="KEGG" id="pst:PSPTO_4116"/>
<dbReference type="PATRIC" id="fig|223283.9.peg.4222"/>
<dbReference type="eggNOG" id="COG0259">
    <property type="taxonomic scope" value="Bacteria"/>
</dbReference>
<dbReference type="HOGENOM" id="CLU_032263_2_2_6"/>
<dbReference type="OrthoDB" id="9780392at2"/>
<dbReference type="PhylomeDB" id="Q87XR0"/>
<dbReference type="UniPathway" id="UPA01068">
    <property type="reaction ID" value="UER00304"/>
</dbReference>
<dbReference type="UniPathway" id="UPA01068">
    <property type="reaction ID" value="UER00305"/>
</dbReference>
<dbReference type="Proteomes" id="UP000002515">
    <property type="component" value="Chromosome"/>
</dbReference>
<dbReference type="GO" id="GO:0010181">
    <property type="term" value="F:FMN binding"/>
    <property type="evidence" value="ECO:0007669"/>
    <property type="project" value="UniProtKB-UniRule"/>
</dbReference>
<dbReference type="GO" id="GO:0004733">
    <property type="term" value="F:pyridoxamine phosphate oxidase activity"/>
    <property type="evidence" value="ECO:0007669"/>
    <property type="project" value="UniProtKB-UniRule"/>
</dbReference>
<dbReference type="GO" id="GO:0008615">
    <property type="term" value="P:pyridoxine biosynthetic process"/>
    <property type="evidence" value="ECO:0007669"/>
    <property type="project" value="UniProtKB-KW"/>
</dbReference>
<dbReference type="FunFam" id="2.30.110.10:FF:000011">
    <property type="entry name" value="Chromosome 7, whole genome shotgun sequence"/>
    <property type="match status" value="1"/>
</dbReference>
<dbReference type="Gene3D" id="2.30.110.10">
    <property type="entry name" value="Electron Transport, Fmn-binding Protein, Chain A"/>
    <property type="match status" value="1"/>
</dbReference>
<dbReference type="HAMAP" id="MF_01629">
    <property type="entry name" value="PdxH"/>
    <property type="match status" value="1"/>
</dbReference>
<dbReference type="InterPro" id="IPR000659">
    <property type="entry name" value="Pyridox_Oxase"/>
</dbReference>
<dbReference type="InterPro" id="IPR019740">
    <property type="entry name" value="Pyridox_Oxase_CS"/>
</dbReference>
<dbReference type="InterPro" id="IPR011576">
    <property type="entry name" value="Pyridox_Oxase_N"/>
</dbReference>
<dbReference type="InterPro" id="IPR019576">
    <property type="entry name" value="Pyridoxamine_oxidase_dimer_C"/>
</dbReference>
<dbReference type="InterPro" id="IPR012349">
    <property type="entry name" value="Split_barrel_FMN-bd"/>
</dbReference>
<dbReference type="NCBIfam" id="TIGR00558">
    <property type="entry name" value="pdxH"/>
    <property type="match status" value="1"/>
</dbReference>
<dbReference type="NCBIfam" id="NF004231">
    <property type="entry name" value="PRK05679.1"/>
    <property type="match status" value="1"/>
</dbReference>
<dbReference type="PANTHER" id="PTHR10851:SF0">
    <property type="entry name" value="PYRIDOXINE-5'-PHOSPHATE OXIDASE"/>
    <property type="match status" value="1"/>
</dbReference>
<dbReference type="PANTHER" id="PTHR10851">
    <property type="entry name" value="PYRIDOXINE-5-PHOSPHATE OXIDASE"/>
    <property type="match status" value="1"/>
</dbReference>
<dbReference type="Pfam" id="PF10590">
    <property type="entry name" value="PNP_phzG_C"/>
    <property type="match status" value="1"/>
</dbReference>
<dbReference type="Pfam" id="PF01243">
    <property type="entry name" value="PNPOx_N"/>
    <property type="match status" value="1"/>
</dbReference>
<dbReference type="PIRSF" id="PIRSF000190">
    <property type="entry name" value="Pyd_amn-ph_oxd"/>
    <property type="match status" value="1"/>
</dbReference>
<dbReference type="SUPFAM" id="SSF50475">
    <property type="entry name" value="FMN-binding split barrel"/>
    <property type="match status" value="1"/>
</dbReference>
<dbReference type="PROSITE" id="PS01064">
    <property type="entry name" value="PYRIDOX_OXIDASE"/>
    <property type="match status" value="1"/>
</dbReference>
<comment type="function">
    <text evidence="1">Catalyzes the oxidation of either pyridoxine 5'-phosphate (PNP) or pyridoxamine 5'-phosphate (PMP) into pyridoxal 5'-phosphate (PLP).</text>
</comment>
<comment type="catalytic activity">
    <reaction evidence="1">
        <text>pyridoxamine 5'-phosphate + O2 + H2O = pyridoxal 5'-phosphate + H2O2 + NH4(+)</text>
        <dbReference type="Rhea" id="RHEA:15817"/>
        <dbReference type="ChEBI" id="CHEBI:15377"/>
        <dbReference type="ChEBI" id="CHEBI:15379"/>
        <dbReference type="ChEBI" id="CHEBI:16240"/>
        <dbReference type="ChEBI" id="CHEBI:28938"/>
        <dbReference type="ChEBI" id="CHEBI:58451"/>
        <dbReference type="ChEBI" id="CHEBI:597326"/>
        <dbReference type="EC" id="1.4.3.5"/>
    </reaction>
</comment>
<comment type="catalytic activity">
    <reaction evidence="1">
        <text>pyridoxine 5'-phosphate + O2 = pyridoxal 5'-phosphate + H2O2</text>
        <dbReference type="Rhea" id="RHEA:15149"/>
        <dbReference type="ChEBI" id="CHEBI:15379"/>
        <dbReference type="ChEBI" id="CHEBI:16240"/>
        <dbReference type="ChEBI" id="CHEBI:58589"/>
        <dbReference type="ChEBI" id="CHEBI:597326"/>
        <dbReference type="EC" id="1.4.3.5"/>
    </reaction>
</comment>
<comment type="cofactor">
    <cofactor evidence="1">
        <name>FMN</name>
        <dbReference type="ChEBI" id="CHEBI:58210"/>
    </cofactor>
    <text evidence="1">Binds 1 FMN per subunit.</text>
</comment>
<comment type="pathway">
    <text evidence="1">Cofactor metabolism; pyridoxal 5'-phosphate salvage; pyridoxal 5'-phosphate from pyridoxamine 5'-phosphate: step 1/1.</text>
</comment>
<comment type="pathway">
    <text evidence="1">Cofactor metabolism; pyridoxal 5'-phosphate salvage; pyridoxal 5'-phosphate from pyridoxine 5'-phosphate: step 1/1.</text>
</comment>
<comment type="subunit">
    <text evidence="1">Homodimer.</text>
</comment>
<comment type="similarity">
    <text evidence="1">Belongs to the pyridoxamine 5'-phosphate oxidase family.</text>
</comment>
<reference key="1">
    <citation type="journal article" date="2003" name="Proc. Natl. Acad. Sci. U.S.A.">
        <title>The complete genome sequence of the Arabidopsis and tomato pathogen Pseudomonas syringae pv. tomato DC3000.</title>
        <authorList>
            <person name="Buell C.R."/>
            <person name="Joardar V."/>
            <person name="Lindeberg M."/>
            <person name="Selengut J."/>
            <person name="Paulsen I.T."/>
            <person name="Gwinn M.L."/>
            <person name="Dodson R.J."/>
            <person name="DeBoy R.T."/>
            <person name="Durkin A.S."/>
            <person name="Kolonay J.F."/>
            <person name="Madupu R."/>
            <person name="Daugherty S.C."/>
            <person name="Brinkac L.M."/>
            <person name="Beanan M.J."/>
            <person name="Haft D.H."/>
            <person name="Nelson W.C."/>
            <person name="Davidsen T.M."/>
            <person name="Zafar N."/>
            <person name="Zhou L."/>
            <person name="Liu J."/>
            <person name="Yuan Q."/>
            <person name="Khouri H.M."/>
            <person name="Fedorova N.B."/>
            <person name="Tran B."/>
            <person name="Russell D."/>
            <person name="Berry K.J."/>
            <person name="Utterback T.R."/>
            <person name="Van Aken S.E."/>
            <person name="Feldblyum T.V."/>
            <person name="D'Ascenzo M."/>
            <person name="Deng W.-L."/>
            <person name="Ramos A.R."/>
            <person name="Alfano J.R."/>
            <person name="Cartinhour S."/>
            <person name="Chatterjee A.K."/>
            <person name="Delaney T.P."/>
            <person name="Lazarowitz S.G."/>
            <person name="Martin G.B."/>
            <person name="Schneider D.J."/>
            <person name="Tang X."/>
            <person name="Bender C.L."/>
            <person name="White O."/>
            <person name="Fraser C.M."/>
            <person name="Collmer A."/>
        </authorList>
    </citation>
    <scope>NUCLEOTIDE SEQUENCE [LARGE SCALE GENOMIC DNA]</scope>
    <source>
        <strain>ATCC BAA-871 / DC3000</strain>
    </source>
</reference>
<keyword id="KW-0285">Flavoprotein</keyword>
<keyword id="KW-0288">FMN</keyword>
<keyword id="KW-0560">Oxidoreductase</keyword>
<keyword id="KW-0664">Pyridoxine biosynthesis</keyword>
<keyword id="KW-1185">Reference proteome</keyword>
<evidence type="ECO:0000255" key="1">
    <source>
        <dbReference type="HAMAP-Rule" id="MF_01629"/>
    </source>
</evidence>